<geneLocation type="chloroplast"/>
<dbReference type="EMBL" id="AB002583">
    <property type="protein sequence ID" value="BAC76244.1"/>
    <property type="molecule type" value="Genomic_DNA"/>
</dbReference>
<dbReference type="RefSeq" id="NP_849082.2">
    <property type="nucleotide sequence ID" value="NC_004799.1"/>
</dbReference>
<dbReference type="SMR" id="Q85FV0"/>
<dbReference type="STRING" id="280699.Q85FV0"/>
<dbReference type="EnsemblPlants" id="CMV177CT">
    <property type="protein sequence ID" value="CMV177CT"/>
    <property type="gene ID" value="CMV177C"/>
</dbReference>
<dbReference type="GeneID" id="845015"/>
<dbReference type="Gramene" id="CMV177CT">
    <property type="protein sequence ID" value="CMV177CT"/>
    <property type="gene ID" value="CMV177C"/>
</dbReference>
<dbReference type="KEGG" id="cme:CymeCp150"/>
<dbReference type="eggNOG" id="KOG1754">
    <property type="taxonomic scope" value="Eukaryota"/>
</dbReference>
<dbReference type="HOGENOM" id="CLU_098428_0_0_1"/>
<dbReference type="Proteomes" id="UP000007014">
    <property type="component" value="Chloroplast"/>
</dbReference>
<dbReference type="GO" id="GO:0009507">
    <property type="term" value="C:chloroplast"/>
    <property type="evidence" value="ECO:0007669"/>
    <property type="project" value="UniProtKB-SubCell"/>
</dbReference>
<dbReference type="GO" id="GO:1990904">
    <property type="term" value="C:ribonucleoprotein complex"/>
    <property type="evidence" value="ECO:0007669"/>
    <property type="project" value="UniProtKB-KW"/>
</dbReference>
<dbReference type="GO" id="GO:0005840">
    <property type="term" value="C:ribosome"/>
    <property type="evidence" value="ECO:0007669"/>
    <property type="project" value="UniProtKB-KW"/>
</dbReference>
<dbReference type="GO" id="GO:0019843">
    <property type="term" value="F:rRNA binding"/>
    <property type="evidence" value="ECO:0007669"/>
    <property type="project" value="UniProtKB-UniRule"/>
</dbReference>
<dbReference type="GO" id="GO:0003735">
    <property type="term" value="F:structural constituent of ribosome"/>
    <property type="evidence" value="ECO:0007669"/>
    <property type="project" value="InterPro"/>
</dbReference>
<dbReference type="GO" id="GO:0006412">
    <property type="term" value="P:translation"/>
    <property type="evidence" value="ECO:0007669"/>
    <property type="project" value="UniProtKB-UniRule"/>
</dbReference>
<dbReference type="FunFam" id="3.30.1490.10:FF:000001">
    <property type="entry name" value="30S ribosomal protein S8"/>
    <property type="match status" value="1"/>
</dbReference>
<dbReference type="Gene3D" id="3.30.1370.30">
    <property type="match status" value="1"/>
</dbReference>
<dbReference type="Gene3D" id="3.30.1490.10">
    <property type="match status" value="1"/>
</dbReference>
<dbReference type="HAMAP" id="MF_01302_B">
    <property type="entry name" value="Ribosomal_uS8_B"/>
    <property type="match status" value="1"/>
</dbReference>
<dbReference type="InterPro" id="IPR000630">
    <property type="entry name" value="Ribosomal_uS8"/>
</dbReference>
<dbReference type="InterPro" id="IPR047863">
    <property type="entry name" value="Ribosomal_uS8_CS"/>
</dbReference>
<dbReference type="InterPro" id="IPR035987">
    <property type="entry name" value="Ribosomal_uS8_sf"/>
</dbReference>
<dbReference type="NCBIfam" id="NF001109">
    <property type="entry name" value="PRK00136.1"/>
    <property type="match status" value="1"/>
</dbReference>
<dbReference type="PANTHER" id="PTHR11758">
    <property type="entry name" value="40S RIBOSOMAL PROTEIN S15A"/>
    <property type="match status" value="1"/>
</dbReference>
<dbReference type="Pfam" id="PF00410">
    <property type="entry name" value="Ribosomal_S8"/>
    <property type="match status" value="1"/>
</dbReference>
<dbReference type="SUPFAM" id="SSF56047">
    <property type="entry name" value="Ribosomal protein S8"/>
    <property type="match status" value="1"/>
</dbReference>
<dbReference type="PROSITE" id="PS00053">
    <property type="entry name" value="RIBOSOMAL_S8"/>
    <property type="match status" value="1"/>
</dbReference>
<name>RR8_CYAM1</name>
<reference key="1">
    <citation type="journal article" date="2003" name="DNA Res.">
        <title>Complete sequence and analysis of the plastid genome of the unicellular red alga Cyanidioschyzon merolae.</title>
        <authorList>
            <person name="Ohta N."/>
            <person name="Matsuzaki M."/>
            <person name="Misumi O."/>
            <person name="Miyagishima S.-Y."/>
            <person name="Nozaki H."/>
            <person name="Tanaka K."/>
            <person name="Shin-i T."/>
            <person name="Kohara Y."/>
            <person name="Kuroiwa T."/>
        </authorList>
    </citation>
    <scope>NUCLEOTIDE SEQUENCE [LARGE SCALE GENOMIC DNA]</scope>
    <source>
        <strain>NIES-3377 / 10D</strain>
    </source>
</reference>
<evidence type="ECO:0000250" key="1"/>
<evidence type="ECO:0000305" key="2"/>
<gene>
    <name type="primary">rps8</name>
</gene>
<accession>Q85FV0</accession>
<protein>
    <recommendedName>
        <fullName evidence="2">Small ribosomal subunit protein uS8c</fullName>
    </recommendedName>
    <alternativeName>
        <fullName>30S ribosomal protein S8, chloroplastic</fullName>
    </alternativeName>
</protein>
<comment type="function">
    <text evidence="1">One of the primary rRNA binding proteins, it binds directly to 16S rRNA central domain where it helps coordinate assembly of the platform of the 30S subunit.</text>
</comment>
<comment type="subunit">
    <text evidence="1">Part of the 30S ribosomal subunit.</text>
</comment>
<comment type="subcellular location">
    <subcellularLocation>
        <location>Plastid</location>
        <location>Chloroplast</location>
    </subcellularLocation>
</comment>
<comment type="similarity">
    <text evidence="2">Belongs to the universal ribosomal protein uS8 family.</text>
</comment>
<sequence length="117" mass="13465">MDTLSQMLTKIRNAQMARHRWVLVPASRMNWNVAQVLREEGLIAQVQPADLHLRIQLKPKRIQRIWRVSKPGLRIYSSYKNMPKVLGMLIISTSKGVMTHQKAKQMQVGGEILCGVY</sequence>
<organism>
    <name type="scientific">Cyanidioschyzon merolae (strain NIES-3377 / 10D)</name>
    <name type="common">Unicellular red alga</name>
    <dbReference type="NCBI Taxonomy" id="280699"/>
    <lineage>
        <taxon>Eukaryota</taxon>
        <taxon>Rhodophyta</taxon>
        <taxon>Bangiophyceae</taxon>
        <taxon>Cyanidiales</taxon>
        <taxon>Cyanidiaceae</taxon>
        <taxon>Cyanidioschyzon</taxon>
    </lineage>
</organism>
<proteinExistence type="inferred from homology"/>
<feature type="chain" id="PRO_0000290993" description="Small ribosomal subunit protein uS8c">
    <location>
        <begin position="1"/>
        <end position="117"/>
    </location>
</feature>
<keyword id="KW-0150">Chloroplast</keyword>
<keyword id="KW-0934">Plastid</keyword>
<keyword id="KW-1185">Reference proteome</keyword>
<keyword id="KW-0687">Ribonucleoprotein</keyword>
<keyword id="KW-0689">Ribosomal protein</keyword>
<keyword id="KW-0694">RNA-binding</keyword>
<keyword id="KW-0699">rRNA-binding</keyword>